<evidence type="ECO:0000255" key="1">
    <source>
        <dbReference type="HAMAP-Rule" id="MF_00569"/>
    </source>
</evidence>
<accession>Q71XZ5</accession>
<protein>
    <recommendedName>
        <fullName evidence="1">Quinolinate synthase</fullName>
        <ecNumber evidence="1">2.5.1.72</ecNumber>
    </recommendedName>
</protein>
<reference key="1">
    <citation type="journal article" date="2004" name="Nucleic Acids Res.">
        <title>Whole genome comparisons of serotype 4b and 1/2a strains of the food-borne pathogen Listeria monocytogenes reveal new insights into the core genome components of this species.</title>
        <authorList>
            <person name="Nelson K.E."/>
            <person name="Fouts D.E."/>
            <person name="Mongodin E.F."/>
            <person name="Ravel J."/>
            <person name="DeBoy R.T."/>
            <person name="Kolonay J.F."/>
            <person name="Rasko D.A."/>
            <person name="Angiuoli S.V."/>
            <person name="Gill S.R."/>
            <person name="Paulsen I.T."/>
            <person name="Peterson J.D."/>
            <person name="White O."/>
            <person name="Nelson W.C."/>
            <person name="Nierman W.C."/>
            <person name="Beanan M.J."/>
            <person name="Brinkac L.M."/>
            <person name="Daugherty S.C."/>
            <person name="Dodson R.J."/>
            <person name="Durkin A.S."/>
            <person name="Madupu R."/>
            <person name="Haft D.H."/>
            <person name="Selengut J."/>
            <person name="Van Aken S.E."/>
            <person name="Khouri H.M."/>
            <person name="Fedorova N."/>
            <person name="Forberger H.A."/>
            <person name="Tran B."/>
            <person name="Kathariou S."/>
            <person name="Wonderling L.D."/>
            <person name="Uhlich G.A."/>
            <person name="Bayles D.O."/>
            <person name="Luchansky J.B."/>
            <person name="Fraser C.M."/>
        </authorList>
    </citation>
    <scope>NUCLEOTIDE SEQUENCE [LARGE SCALE GENOMIC DNA]</scope>
    <source>
        <strain>F2365</strain>
    </source>
</reference>
<gene>
    <name evidence="1" type="primary">nadA</name>
    <name type="ordered locus">LMOf2365_2050</name>
</gene>
<keyword id="KW-0004">4Fe-4S</keyword>
<keyword id="KW-0963">Cytoplasm</keyword>
<keyword id="KW-0408">Iron</keyword>
<keyword id="KW-0411">Iron-sulfur</keyword>
<keyword id="KW-0479">Metal-binding</keyword>
<keyword id="KW-0662">Pyridine nucleotide biosynthesis</keyword>
<keyword id="KW-0808">Transferase</keyword>
<sequence length="366" mass="41161">MNLLETVEQDTMPTHYKQMTQAEMIARVTEIKAQLGENLFIPCHHYQKDEVVPFADAIGDSLQLAQIAAQNKKAKHIVFCGVHFMAETADMLTTSEQIVTLPDMRAGCSMADMADIHQLTNAWPKLQTLFGDTILPVTYINSTAAIKSFVGEHGGTTVTSSNATKIVSWALEQKERIFFLPDQHLGRNTAFELGIPLEHMAIWNPIKNELEYEGNLDDCKVILWKGYCSVHQHFTVKNIENIRKNNPKMRIIVHPECTHEVVSLADDSGSTKKIVTEINNAAPGTEWAVGTEANLVGRIIQENPDKKIVSLNPFMCPCMTMNRIDLPHLLWTLEAIQNGEQRNQIKVDKQTTKFALKALERMLQLS</sequence>
<dbReference type="EC" id="2.5.1.72" evidence="1"/>
<dbReference type="EMBL" id="AE017262">
    <property type="protein sequence ID" value="AAT04820.1"/>
    <property type="molecule type" value="Genomic_DNA"/>
</dbReference>
<dbReference type="RefSeq" id="WP_003725774.1">
    <property type="nucleotide sequence ID" value="NC_002973.6"/>
</dbReference>
<dbReference type="SMR" id="Q71XZ5"/>
<dbReference type="KEGG" id="lmf:LMOf2365_2050"/>
<dbReference type="HOGENOM" id="CLU_047382_2_0_9"/>
<dbReference type="UniPathway" id="UPA00253">
    <property type="reaction ID" value="UER00327"/>
</dbReference>
<dbReference type="GO" id="GO:0005829">
    <property type="term" value="C:cytosol"/>
    <property type="evidence" value="ECO:0007669"/>
    <property type="project" value="TreeGrafter"/>
</dbReference>
<dbReference type="GO" id="GO:0051539">
    <property type="term" value="F:4 iron, 4 sulfur cluster binding"/>
    <property type="evidence" value="ECO:0007669"/>
    <property type="project" value="UniProtKB-KW"/>
</dbReference>
<dbReference type="GO" id="GO:0046872">
    <property type="term" value="F:metal ion binding"/>
    <property type="evidence" value="ECO:0007669"/>
    <property type="project" value="UniProtKB-KW"/>
</dbReference>
<dbReference type="GO" id="GO:0008987">
    <property type="term" value="F:quinolinate synthetase A activity"/>
    <property type="evidence" value="ECO:0007669"/>
    <property type="project" value="UniProtKB-UniRule"/>
</dbReference>
<dbReference type="GO" id="GO:0034628">
    <property type="term" value="P:'de novo' NAD biosynthetic process from L-aspartate"/>
    <property type="evidence" value="ECO:0007669"/>
    <property type="project" value="TreeGrafter"/>
</dbReference>
<dbReference type="FunFam" id="3.40.50.10800:FF:000001">
    <property type="entry name" value="Quinolinate synthase A"/>
    <property type="match status" value="1"/>
</dbReference>
<dbReference type="Gene3D" id="3.40.50.10800">
    <property type="entry name" value="NadA-like"/>
    <property type="match status" value="3"/>
</dbReference>
<dbReference type="HAMAP" id="MF_00569">
    <property type="entry name" value="NadA_type3"/>
    <property type="match status" value="1"/>
</dbReference>
<dbReference type="InterPro" id="IPR003473">
    <property type="entry name" value="NadA"/>
</dbReference>
<dbReference type="InterPro" id="IPR036094">
    <property type="entry name" value="NadA_sf"/>
</dbReference>
<dbReference type="InterPro" id="IPR023515">
    <property type="entry name" value="Quinolinate_synth_A_type3"/>
</dbReference>
<dbReference type="NCBIfam" id="TIGR00550">
    <property type="entry name" value="nadA"/>
    <property type="match status" value="1"/>
</dbReference>
<dbReference type="NCBIfam" id="NF006880">
    <property type="entry name" value="PRK09375.2-1"/>
    <property type="match status" value="1"/>
</dbReference>
<dbReference type="NCBIfam" id="NF006883">
    <property type="entry name" value="PRK09375.2-4"/>
    <property type="match status" value="1"/>
</dbReference>
<dbReference type="PANTHER" id="PTHR30573:SF0">
    <property type="entry name" value="QUINOLINATE SYNTHASE, CHLOROPLASTIC"/>
    <property type="match status" value="1"/>
</dbReference>
<dbReference type="PANTHER" id="PTHR30573">
    <property type="entry name" value="QUINOLINATE SYNTHETASE A"/>
    <property type="match status" value="1"/>
</dbReference>
<dbReference type="Pfam" id="PF02445">
    <property type="entry name" value="NadA"/>
    <property type="match status" value="1"/>
</dbReference>
<dbReference type="SUPFAM" id="SSF142754">
    <property type="entry name" value="NadA-like"/>
    <property type="match status" value="1"/>
</dbReference>
<name>NADA_LISMF</name>
<comment type="function">
    <text evidence="1">Catalyzes the condensation of iminoaspartate with dihydroxyacetone phosphate to form quinolinate.</text>
</comment>
<comment type="catalytic activity">
    <reaction evidence="1">
        <text>iminosuccinate + dihydroxyacetone phosphate = quinolinate + phosphate + 2 H2O + H(+)</text>
        <dbReference type="Rhea" id="RHEA:25888"/>
        <dbReference type="ChEBI" id="CHEBI:15377"/>
        <dbReference type="ChEBI" id="CHEBI:15378"/>
        <dbReference type="ChEBI" id="CHEBI:29959"/>
        <dbReference type="ChEBI" id="CHEBI:43474"/>
        <dbReference type="ChEBI" id="CHEBI:57642"/>
        <dbReference type="ChEBI" id="CHEBI:77875"/>
        <dbReference type="EC" id="2.5.1.72"/>
    </reaction>
    <physiologicalReaction direction="left-to-right" evidence="1">
        <dbReference type="Rhea" id="RHEA:25889"/>
    </physiologicalReaction>
</comment>
<comment type="cofactor">
    <cofactor evidence="1">
        <name>[4Fe-4S] cluster</name>
        <dbReference type="ChEBI" id="CHEBI:49883"/>
    </cofactor>
    <text evidence="1">Binds 1 [4Fe-4S] cluster per subunit.</text>
</comment>
<comment type="pathway">
    <text evidence="1">Cofactor biosynthesis; NAD(+) biosynthesis; quinolinate from iminoaspartate: step 1/1.</text>
</comment>
<comment type="subcellular location">
    <subcellularLocation>
        <location evidence="1">Cytoplasm</location>
    </subcellularLocation>
</comment>
<comment type="similarity">
    <text evidence="1">Belongs to the quinolinate synthase family. Type 3 subfamily.</text>
</comment>
<organism>
    <name type="scientific">Listeria monocytogenes serotype 4b (strain F2365)</name>
    <dbReference type="NCBI Taxonomy" id="265669"/>
    <lineage>
        <taxon>Bacteria</taxon>
        <taxon>Bacillati</taxon>
        <taxon>Bacillota</taxon>
        <taxon>Bacilli</taxon>
        <taxon>Bacillales</taxon>
        <taxon>Listeriaceae</taxon>
        <taxon>Listeria</taxon>
    </lineage>
</organism>
<feature type="chain" id="PRO_0000155821" description="Quinolinate synthase">
    <location>
        <begin position="1"/>
        <end position="366"/>
    </location>
</feature>
<feature type="binding site" evidence="1">
    <location>
        <position position="44"/>
    </location>
    <ligand>
        <name>iminosuccinate</name>
        <dbReference type="ChEBI" id="CHEBI:77875"/>
    </ligand>
</feature>
<feature type="binding site" evidence="1">
    <location>
        <position position="61"/>
    </location>
    <ligand>
        <name>iminosuccinate</name>
        <dbReference type="ChEBI" id="CHEBI:77875"/>
    </ligand>
</feature>
<feature type="binding site" evidence="1">
    <location>
        <position position="108"/>
    </location>
    <ligand>
        <name>[4Fe-4S] cluster</name>
        <dbReference type="ChEBI" id="CHEBI:49883"/>
    </ligand>
</feature>
<feature type="binding site" evidence="1">
    <location>
        <begin position="139"/>
        <end position="141"/>
    </location>
    <ligand>
        <name>iminosuccinate</name>
        <dbReference type="ChEBI" id="CHEBI:77875"/>
    </ligand>
</feature>
<feature type="binding site" evidence="1">
    <location>
        <position position="160"/>
    </location>
    <ligand>
        <name>iminosuccinate</name>
        <dbReference type="ChEBI" id="CHEBI:77875"/>
    </ligand>
</feature>
<feature type="binding site" evidence="1">
    <location>
        <position position="228"/>
    </location>
    <ligand>
        <name>[4Fe-4S] cluster</name>
        <dbReference type="ChEBI" id="CHEBI:49883"/>
    </ligand>
</feature>
<feature type="binding site" evidence="1">
    <location>
        <begin position="254"/>
        <end position="256"/>
    </location>
    <ligand>
        <name>iminosuccinate</name>
        <dbReference type="ChEBI" id="CHEBI:77875"/>
    </ligand>
</feature>
<feature type="binding site" evidence="1">
    <location>
        <position position="271"/>
    </location>
    <ligand>
        <name>iminosuccinate</name>
        <dbReference type="ChEBI" id="CHEBI:77875"/>
    </ligand>
</feature>
<feature type="binding site" evidence="1">
    <location>
        <position position="318"/>
    </location>
    <ligand>
        <name>[4Fe-4S] cluster</name>
        <dbReference type="ChEBI" id="CHEBI:49883"/>
    </ligand>
</feature>
<proteinExistence type="inferred from homology"/>